<protein>
    <recommendedName>
        <fullName evidence="1">ATP-dependent zinc metalloprotease FtsH</fullName>
        <ecNumber evidence="1">3.4.24.-</ecNumber>
    </recommendedName>
</protein>
<evidence type="ECO:0000255" key="1">
    <source>
        <dbReference type="HAMAP-Rule" id="MF_01458"/>
    </source>
</evidence>
<evidence type="ECO:0000256" key="2">
    <source>
        <dbReference type="SAM" id="MobiDB-lite"/>
    </source>
</evidence>
<keyword id="KW-0067">ATP-binding</keyword>
<keyword id="KW-0997">Cell inner membrane</keyword>
<keyword id="KW-1003">Cell membrane</keyword>
<keyword id="KW-0378">Hydrolase</keyword>
<keyword id="KW-0472">Membrane</keyword>
<keyword id="KW-0479">Metal-binding</keyword>
<keyword id="KW-0482">Metalloprotease</keyword>
<keyword id="KW-0547">Nucleotide-binding</keyword>
<keyword id="KW-0645">Protease</keyword>
<keyword id="KW-0812">Transmembrane</keyword>
<keyword id="KW-1133">Transmembrane helix</keyword>
<keyword id="KW-0862">Zinc</keyword>
<proteinExistence type="inferred from homology"/>
<feature type="chain" id="PRO_0000272336" description="ATP-dependent zinc metalloprotease FtsH">
    <location>
        <begin position="1"/>
        <end position="635"/>
    </location>
</feature>
<feature type="topological domain" description="Cytoplasmic" evidence="1">
    <location>
        <begin position="1"/>
        <end position="6"/>
    </location>
</feature>
<feature type="transmembrane region" description="Helical" evidence="1">
    <location>
        <begin position="7"/>
        <end position="27"/>
    </location>
</feature>
<feature type="topological domain" description="Periplasmic" evidence="1">
    <location>
        <begin position="28"/>
        <end position="103"/>
    </location>
</feature>
<feature type="transmembrane region" description="Helical" evidence="1">
    <location>
        <begin position="104"/>
        <end position="124"/>
    </location>
</feature>
<feature type="topological domain" description="Cytoplasmic" evidence="1">
    <location>
        <begin position="125"/>
        <end position="635"/>
    </location>
</feature>
<feature type="region of interest" description="Disordered" evidence="2">
    <location>
        <begin position="600"/>
        <end position="635"/>
    </location>
</feature>
<feature type="compositionally biased region" description="Basic and acidic residues" evidence="2">
    <location>
        <begin position="615"/>
        <end position="635"/>
    </location>
</feature>
<feature type="active site" evidence="1">
    <location>
        <position position="418"/>
    </location>
</feature>
<feature type="binding site" evidence="1">
    <location>
        <begin position="195"/>
        <end position="202"/>
    </location>
    <ligand>
        <name>ATP</name>
        <dbReference type="ChEBI" id="CHEBI:30616"/>
    </ligand>
</feature>
<feature type="binding site" evidence="1">
    <location>
        <position position="417"/>
    </location>
    <ligand>
        <name>Zn(2+)</name>
        <dbReference type="ChEBI" id="CHEBI:29105"/>
        <note>catalytic</note>
    </ligand>
</feature>
<feature type="binding site" evidence="1">
    <location>
        <position position="421"/>
    </location>
    <ligand>
        <name>Zn(2+)</name>
        <dbReference type="ChEBI" id="CHEBI:29105"/>
        <note>catalytic</note>
    </ligand>
</feature>
<feature type="binding site" evidence="1">
    <location>
        <position position="495"/>
    </location>
    <ligand>
        <name>Zn(2+)</name>
        <dbReference type="ChEBI" id="CHEBI:29105"/>
        <note>catalytic</note>
    </ligand>
</feature>
<reference key="1">
    <citation type="journal article" date="2005" name="PLoS Biol.">
        <title>The genome sequence of Rickettsia felis identifies the first putative conjugative plasmid in an obligate intracellular parasite.</title>
        <authorList>
            <person name="Ogata H."/>
            <person name="Renesto P."/>
            <person name="Audic S."/>
            <person name="Robert C."/>
            <person name="Blanc G."/>
            <person name="Fournier P.-E."/>
            <person name="Parinello H."/>
            <person name="Claverie J.-M."/>
            <person name="Raoult D."/>
        </authorList>
    </citation>
    <scope>NUCLEOTIDE SEQUENCE [LARGE SCALE GENOMIC DNA]</scope>
    <source>
        <strain>ATCC VR-1525 / URRWXCal2</strain>
    </source>
</reference>
<dbReference type="EC" id="3.4.24.-" evidence="1"/>
<dbReference type="EMBL" id="CP000053">
    <property type="protein sequence ID" value="AAY60990.1"/>
    <property type="molecule type" value="Genomic_DNA"/>
</dbReference>
<dbReference type="SMR" id="Q4UN68"/>
<dbReference type="STRING" id="315456.RF_0139"/>
<dbReference type="KEGG" id="rfe:RF_0139"/>
<dbReference type="eggNOG" id="COG0465">
    <property type="taxonomic scope" value="Bacteria"/>
</dbReference>
<dbReference type="HOGENOM" id="CLU_000688_16_2_5"/>
<dbReference type="OrthoDB" id="9809379at2"/>
<dbReference type="Proteomes" id="UP000008548">
    <property type="component" value="Chromosome"/>
</dbReference>
<dbReference type="GO" id="GO:0005886">
    <property type="term" value="C:plasma membrane"/>
    <property type="evidence" value="ECO:0007669"/>
    <property type="project" value="UniProtKB-SubCell"/>
</dbReference>
<dbReference type="GO" id="GO:0005524">
    <property type="term" value="F:ATP binding"/>
    <property type="evidence" value="ECO:0007669"/>
    <property type="project" value="UniProtKB-UniRule"/>
</dbReference>
<dbReference type="GO" id="GO:0016887">
    <property type="term" value="F:ATP hydrolysis activity"/>
    <property type="evidence" value="ECO:0007669"/>
    <property type="project" value="UniProtKB-UniRule"/>
</dbReference>
<dbReference type="GO" id="GO:0004176">
    <property type="term" value="F:ATP-dependent peptidase activity"/>
    <property type="evidence" value="ECO:0007669"/>
    <property type="project" value="InterPro"/>
</dbReference>
<dbReference type="GO" id="GO:0004222">
    <property type="term" value="F:metalloendopeptidase activity"/>
    <property type="evidence" value="ECO:0007669"/>
    <property type="project" value="InterPro"/>
</dbReference>
<dbReference type="GO" id="GO:0008270">
    <property type="term" value="F:zinc ion binding"/>
    <property type="evidence" value="ECO:0007669"/>
    <property type="project" value="UniProtKB-UniRule"/>
</dbReference>
<dbReference type="GO" id="GO:0030163">
    <property type="term" value="P:protein catabolic process"/>
    <property type="evidence" value="ECO:0007669"/>
    <property type="project" value="UniProtKB-UniRule"/>
</dbReference>
<dbReference type="GO" id="GO:0006508">
    <property type="term" value="P:proteolysis"/>
    <property type="evidence" value="ECO:0007669"/>
    <property type="project" value="UniProtKB-KW"/>
</dbReference>
<dbReference type="CDD" id="cd19501">
    <property type="entry name" value="RecA-like_FtsH"/>
    <property type="match status" value="1"/>
</dbReference>
<dbReference type="FunFam" id="1.10.8.60:FF:000001">
    <property type="entry name" value="ATP-dependent zinc metalloprotease FtsH"/>
    <property type="match status" value="1"/>
</dbReference>
<dbReference type="FunFam" id="1.20.58.760:FF:000001">
    <property type="entry name" value="ATP-dependent zinc metalloprotease FtsH"/>
    <property type="match status" value="1"/>
</dbReference>
<dbReference type="FunFam" id="3.40.50.300:FF:000001">
    <property type="entry name" value="ATP-dependent zinc metalloprotease FtsH"/>
    <property type="match status" value="1"/>
</dbReference>
<dbReference type="Gene3D" id="1.10.8.60">
    <property type="match status" value="1"/>
</dbReference>
<dbReference type="Gene3D" id="3.30.720.210">
    <property type="match status" value="1"/>
</dbReference>
<dbReference type="Gene3D" id="3.40.50.300">
    <property type="entry name" value="P-loop containing nucleotide triphosphate hydrolases"/>
    <property type="match status" value="1"/>
</dbReference>
<dbReference type="Gene3D" id="1.20.58.760">
    <property type="entry name" value="Peptidase M41"/>
    <property type="match status" value="1"/>
</dbReference>
<dbReference type="HAMAP" id="MF_01458">
    <property type="entry name" value="FtsH"/>
    <property type="match status" value="1"/>
</dbReference>
<dbReference type="InterPro" id="IPR003593">
    <property type="entry name" value="AAA+_ATPase"/>
</dbReference>
<dbReference type="InterPro" id="IPR041569">
    <property type="entry name" value="AAA_lid_3"/>
</dbReference>
<dbReference type="InterPro" id="IPR003959">
    <property type="entry name" value="ATPase_AAA_core"/>
</dbReference>
<dbReference type="InterPro" id="IPR003960">
    <property type="entry name" value="ATPase_AAA_CS"/>
</dbReference>
<dbReference type="InterPro" id="IPR005936">
    <property type="entry name" value="FtsH"/>
</dbReference>
<dbReference type="InterPro" id="IPR027417">
    <property type="entry name" value="P-loop_NTPase"/>
</dbReference>
<dbReference type="InterPro" id="IPR011546">
    <property type="entry name" value="Pept_M41_FtsH_extracell"/>
</dbReference>
<dbReference type="InterPro" id="IPR000642">
    <property type="entry name" value="Peptidase_M41"/>
</dbReference>
<dbReference type="InterPro" id="IPR037219">
    <property type="entry name" value="Peptidase_M41-like"/>
</dbReference>
<dbReference type="NCBIfam" id="TIGR01241">
    <property type="entry name" value="FtsH_fam"/>
    <property type="match status" value="1"/>
</dbReference>
<dbReference type="PANTHER" id="PTHR23076:SF97">
    <property type="entry name" value="ATP-DEPENDENT ZINC METALLOPROTEASE YME1L1"/>
    <property type="match status" value="1"/>
</dbReference>
<dbReference type="PANTHER" id="PTHR23076">
    <property type="entry name" value="METALLOPROTEASE M41 FTSH"/>
    <property type="match status" value="1"/>
</dbReference>
<dbReference type="Pfam" id="PF00004">
    <property type="entry name" value="AAA"/>
    <property type="match status" value="1"/>
</dbReference>
<dbReference type="Pfam" id="PF17862">
    <property type="entry name" value="AAA_lid_3"/>
    <property type="match status" value="1"/>
</dbReference>
<dbReference type="Pfam" id="PF06480">
    <property type="entry name" value="FtsH_ext"/>
    <property type="match status" value="1"/>
</dbReference>
<dbReference type="Pfam" id="PF01434">
    <property type="entry name" value="Peptidase_M41"/>
    <property type="match status" value="1"/>
</dbReference>
<dbReference type="SMART" id="SM00382">
    <property type="entry name" value="AAA"/>
    <property type="match status" value="1"/>
</dbReference>
<dbReference type="SUPFAM" id="SSF140990">
    <property type="entry name" value="FtsH protease domain-like"/>
    <property type="match status" value="1"/>
</dbReference>
<dbReference type="SUPFAM" id="SSF52540">
    <property type="entry name" value="P-loop containing nucleoside triphosphate hydrolases"/>
    <property type="match status" value="1"/>
</dbReference>
<dbReference type="PROSITE" id="PS00674">
    <property type="entry name" value="AAA"/>
    <property type="match status" value="1"/>
</dbReference>
<comment type="function">
    <text evidence="1">Acts as a processive, ATP-dependent zinc metallopeptidase for both cytoplasmic and membrane proteins. Plays a role in the quality control of integral membrane proteins.</text>
</comment>
<comment type="cofactor">
    <cofactor evidence="1">
        <name>Zn(2+)</name>
        <dbReference type="ChEBI" id="CHEBI:29105"/>
    </cofactor>
    <text evidence="1">Binds 1 zinc ion per subunit.</text>
</comment>
<comment type="subunit">
    <text evidence="1">Homohexamer.</text>
</comment>
<comment type="subcellular location">
    <subcellularLocation>
        <location evidence="1">Cell inner membrane</location>
        <topology evidence="1">Multi-pass membrane protein</topology>
        <orientation evidence="1">Cytoplasmic side</orientation>
    </subcellularLocation>
</comment>
<comment type="similarity">
    <text evidence="1">In the central section; belongs to the AAA ATPase family.</text>
</comment>
<comment type="similarity">
    <text evidence="1">In the C-terminal section; belongs to the peptidase M41 family.</text>
</comment>
<organism>
    <name type="scientific">Rickettsia felis (strain ATCC VR-1525 / URRWXCal2)</name>
    <name type="common">Rickettsia azadi</name>
    <dbReference type="NCBI Taxonomy" id="315456"/>
    <lineage>
        <taxon>Bacteria</taxon>
        <taxon>Pseudomonadati</taxon>
        <taxon>Pseudomonadota</taxon>
        <taxon>Alphaproteobacteria</taxon>
        <taxon>Rickettsiales</taxon>
        <taxon>Rickettsiaceae</taxon>
        <taxon>Rickettsieae</taxon>
        <taxon>Rickettsia</taxon>
        <taxon>spotted fever group</taxon>
    </lineage>
</organism>
<name>FTSH_RICFE</name>
<sequence>MNNQGRSILTWAALFVFVILLFNVFQSDGLLGGRNNITFSDFLTRVDEKTVNSVKIQGRVIEGTSNDGSTFNTYAPDYPDLVNRLTSNDVNIEVVPLETRMNTFLGFLISWFPMLLLIGVWVFFMRQMHGGGKAMGFGKSKARLLSDKGPKITFKDVAGIDEAKEELTEIVDFLRDPSKFQKLGGKIPKGCLLIGPPGTGKTLLAKAIAGEANVPFFSISGSDFVEMFVGVGASRVRDMFEQGKRNAPCIIFIDEIDAVGRHRGIGMGGGNDEREQTLNQMLVEMDGFEANEGVVIIAATNRPDVLDRALLRPGRFDRQIAVANPDINGREQILKVHLKKIKYNSTVLARIIARGTPGFSGAELANLVNEAALIAARLGKKEVDMHDMEEAKDKVLMGVARRSIAMSEKEKRLTAYHEGGHALVGLYCPAASPLHKATIIPRGNALGMVQRLPETDEYSQNREQMESSIAVYMAGRVAEEIIFGRNKVTSGASSDIKGATNIARAMVTKAGLSDLIGPIFHGSSSDDMYGRQPSNETSEATAELIDAEVKKIITQGYEFAKDILTKHIDQLHTLANALIEYETLSGQQIKNLLSGRALDSEEENKFPFNDSPTIKIDKEKSPEKAKKAKKESTNI</sequence>
<accession>Q4UN68</accession>
<gene>
    <name evidence="1" type="primary">ftsH</name>
    <name type="ordered locus">RF_0139</name>
</gene>